<gene>
    <name evidence="1" type="primary">potA</name>
    <name type="ordered locus">SFV_1144</name>
</gene>
<name>POTA_SHIF8</name>
<evidence type="ECO:0000255" key="1">
    <source>
        <dbReference type="HAMAP-Rule" id="MF_01726"/>
    </source>
</evidence>
<feature type="chain" id="PRO_0000286286" description="Spermidine/putrescine import ATP-binding protein PotA">
    <location>
        <begin position="1"/>
        <end position="378"/>
    </location>
</feature>
<feature type="domain" description="ABC transporter" evidence="1">
    <location>
        <begin position="18"/>
        <end position="248"/>
    </location>
</feature>
<feature type="binding site" evidence="1">
    <location>
        <begin position="50"/>
        <end position="57"/>
    </location>
    <ligand>
        <name>ATP</name>
        <dbReference type="ChEBI" id="CHEBI:30616"/>
    </ligand>
</feature>
<accession>Q0T5R2</accession>
<keyword id="KW-0067">ATP-binding</keyword>
<keyword id="KW-0997">Cell inner membrane</keyword>
<keyword id="KW-1003">Cell membrane</keyword>
<keyword id="KW-0472">Membrane</keyword>
<keyword id="KW-0547">Nucleotide-binding</keyword>
<keyword id="KW-1278">Translocase</keyword>
<keyword id="KW-0813">Transport</keyword>
<reference key="1">
    <citation type="journal article" date="2006" name="BMC Genomics">
        <title>Complete genome sequence of Shigella flexneri 5b and comparison with Shigella flexneri 2a.</title>
        <authorList>
            <person name="Nie H."/>
            <person name="Yang F."/>
            <person name="Zhang X."/>
            <person name="Yang J."/>
            <person name="Chen L."/>
            <person name="Wang J."/>
            <person name="Xiong Z."/>
            <person name="Peng J."/>
            <person name="Sun L."/>
            <person name="Dong J."/>
            <person name="Xue Y."/>
            <person name="Xu X."/>
            <person name="Chen S."/>
            <person name="Yao Z."/>
            <person name="Shen Y."/>
            <person name="Jin Q."/>
        </authorList>
    </citation>
    <scope>NUCLEOTIDE SEQUENCE [LARGE SCALE GENOMIC DNA]</scope>
    <source>
        <strain>8401</strain>
    </source>
</reference>
<proteinExistence type="inferred from homology"/>
<protein>
    <recommendedName>
        <fullName evidence="1">Spermidine/putrescine import ATP-binding protein PotA</fullName>
        <ecNumber evidence="1">7.6.2.11</ecNumber>
    </recommendedName>
</protein>
<comment type="function">
    <text evidence="1">Part of the ABC transporter complex PotABCD involved in spermidine/putrescine import. Responsible for energy coupling to the transport system.</text>
</comment>
<comment type="catalytic activity">
    <reaction evidence="1">
        <text>ATP + H2O + polyamine-[polyamine-binding protein]Side 1 = ADP + phosphate + polyamineSide 2 + [polyamine-binding protein]Side 1.</text>
        <dbReference type="EC" id="7.6.2.11"/>
    </reaction>
</comment>
<comment type="subunit">
    <text evidence="1">The complex is composed of two ATP-binding proteins (PotA), two transmembrane proteins (PotB and PotC) and a solute-binding protein (PotD).</text>
</comment>
<comment type="subcellular location">
    <subcellularLocation>
        <location evidence="1">Cell inner membrane</location>
        <topology evidence="1">Peripheral membrane protein</topology>
    </subcellularLocation>
</comment>
<comment type="similarity">
    <text evidence="1">Belongs to the ABC transporter superfamily. Spermidine/putrescine importer (TC 3.A.1.11.1) family.</text>
</comment>
<organism>
    <name type="scientific">Shigella flexneri serotype 5b (strain 8401)</name>
    <dbReference type="NCBI Taxonomy" id="373384"/>
    <lineage>
        <taxon>Bacteria</taxon>
        <taxon>Pseudomonadati</taxon>
        <taxon>Pseudomonadota</taxon>
        <taxon>Gammaproteobacteria</taxon>
        <taxon>Enterobacterales</taxon>
        <taxon>Enterobacteriaceae</taxon>
        <taxon>Shigella</taxon>
    </lineage>
</organism>
<sequence>MGQSKKLNKQPSSLSPLVQLAGIRKCFDGKEVIPQLDLTINNGEFLTLLGPSGCGKTTVLRLIAGLETVDSGRIMLDNEDITHVPAENRYVNTVFQSYALFPHMTVFENVAFGLRMQKTPAAEITPRVMEALRMVQLETFAQRKPHQLSGGQQQRVAIARAVVNKPRLLLLDESLSALDYKLRKQMQNELKALQRKLGITFVFVTHDQEEALTMSDRIVMMRDGRIEQDGTPRDIYEEPKNLFVTGFIAEIHMFNATVIERLDEQRVRANVEGRECNIYVNFAVEPGQKLHVLLRPEDLRVEEINDDNHAEGLIGYVRERNYKGMTLESVVELENGKMVMVSEFFNEDDPDFDHSLDQKMAINWVESWEVVLADEEHK</sequence>
<dbReference type="EC" id="7.6.2.11" evidence="1"/>
<dbReference type="EMBL" id="CP000266">
    <property type="protein sequence ID" value="ABF03353.1"/>
    <property type="molecule type" value="Genomic_DNA"/>
</dbReference>
<dbReference type="RefSeq" id="WP_000531591.1">
    <property type="nucleotide sequence ID" value="NC_008258.1"/>
</dbReference>
<dbReference type="SMR" id="Q0T5R2"/>
<dbReference type="KEGG" id="sfv:SFV_1144"/>
<dbReference type="HOGENOM" id="CLU_000604_1_1_6"/>
<dbReference type="Proteomes" id="UP000000659">
    <property type="component" value="Chromosome"/>
</dbReference>
<dbReference type="GO" id="GO:0043190">
    <property type="term" value="C:ATP-binding cassette (ABC) transporter complex"/>
    <property type="evidence" value="ECO:0007669"/>
    <property type="project" value="InterPro"/>
</dbReference>
<dbReference type="GO" id="GO:0015594">
    <property type="term" value="F:ABC-type putrescine transporter activity"/>
    <property type="evidence" value="ECO:0007669"/>
    <property type="project" value="InterPro"/>
</dbReference>
<dbReference type="GO" id="GO:0005524">
    <property type="term" value="F:ATP binding"/>
    <property type="evidence" value="ECO:0007669"/>
    <property type="project" value="UniProtKB-KW"/>
</dbReference>
<dbReference type="GO" id="GO:0016887">
    <property type="term" value="F:ATP hydrolysis activity"/>
    <property type="evidence" value="ECO:0007669"/>
    <property type="project" value="InterPro"/>
</dbReference>
<dbReference type="CDD" id="cd03300">
    <property type="entry name" value="ABC_PotA_N"/>
    <property type="match status" value="1"/>
</dbReference>
<dbReference type="FunFam" id="2.40.50.100:FF:000017">
    <property type="entry name" value="Spermidine/putrescine import ATP-binding protein PotA"/>
    <property type="match status" value="1"/>
</dbReference>
<dbReference type="FunFam" id="3.40.50.300:FF:000133">
    <property type="entry name" value="Spermidine/putrescine import ATP-binding protein PotA"/>
    <property type="match status" value="1"/>
</dbReference>
<dbReference type="Gene3D" id="2.40.50.100">
    <property type="match status" value="1"/>
</dbReference>
<dbReference type="Gene3D" id="3.40.50.300">
    <property type="entry name" value="P-loop containing nucleotide triphosphate hydrolases"/>
    <property type="match status" value="1"/>
</dbReference>
<dbReference type="InterPro" id="IPR003593">
    <property type="entry name" value="AAA+_ATPase"/>
</dbReference>
<dbReference type="InterPro" id="IPR050093">
    <property type="entry name" value="ABC_SmlMolc_Importer"/>
</dbReference>
<dbReference type="InterPro" id="IPR003439">
    <property type="entry name" value="ABC_transporter-like_ATP-bd"/>
</dbReference>
<dbReference type="InterPro" id="IPR017871">
    <property type="entry name" value="ABC_transporter-like_CS"/>
</dbReference>
<dbReference type="InterPro" id="IPR008995">
    <property type="entry name" value="Mo/tungstate-bd_C_term_dom"/>
</dbReference>
<dbReference type="InterPro" id="IPR027417">
    <property type="entry name" value="P-loop_NTPase"/>
</dbReference>
<dbReference type="InterPro" id="IPR005893">
    <property type="entry name" value="PotA-like"/>
</dbReference>
<dbReference type="InterPro" id="IPR017879">
    <property type="entry name" value="PotA_ATP-bd"/>
</dbReference>
<dbReference type="InterPro" id="IPR013611">
    <property type="entry name" value="Transp-assoc_OB_typ2"/>
</dbReference>
<dbReference type="NCBIfam" id="TIGR01187">
    <property type="entry name" value="potA"/>
    <property type="match status" value="1"/>
</dbReference>
<dbReference type="NCBIfam" id="NF006987">
    <property type="entry name" value="PRK09452.1"/>
    <property type="match status" value="1"/>
</dbReference>
<dbReference type="PANTHER" id="PTHR42781">
    <property type="entry name" value="SPERMIDINE/PUTRESCINE IMPORT ATP-BINDING PROTEIN POTA"/>
    <property type="match status" value="1"/>
</dbReference>
<dbReference type="PANTHER" id="PTHR42781:SF4">
    <property type="entry name" value="SPERMIDINE_PUTRESCINE IMPORT ATP-BINDING PROTEIN POTA"/>
    <property type="match status" value="1"/>
</dbReference>
<dbReference type="Pfam" id="PF00005">
    <property type="entry name" value="ABC_tran"/>
    <property type="match status" value="1"/>
</dbReference>
<dbReference type="Pfam" id="PF08402">
    <property type="entry name" value="TOBE_2"/>
    <property type="match status" value="1"/>
</dbReference>
<dbReference type="SMART" id="SM00382">
    <property type="entry name" value="AAA"/>
    <property type="match status" value="1"/>
</dbReference>
<dbReference type="SUPFAM" id="SSF50331">
    <property type="entry name" value="MOP-like"/>
    <property type="match status" value="1"/>
</dbReference>
<dbReference type="SUPFAM" id="SSF52540">
    <property type="entry name" value="P-loop containing nucleoside triphosphate hydrolases"/>
    <property type="match status" value="1"/>
</dbReference>
<dbReference type="PROSITE" id="PS00211">
    <property type="entry name" value="ABC_TRANSPORTER_1"/>
    <property type="match status" value="1"/>
</dbReference>
<dbReference type="PROSITE" id="PS50893">
    <property type="entry name" value="ABC_TRANSPORTER_2"/>
    <property type="match status" value="1"/>
</dbReference>
<dbReference type="PROSITE" id="PS51305">
    <property type="entry name" value="POTA"/>
    <property type="match status" value="1"/>
</dbReference>